<feature type="transit peptide" description="Chloroplast" evidence="1">
    <location>
        <begin position="1"/>
        <end position="45"/>
    </location>
</feature>
<feature type="chain" id="PRO_0000007812" description="Chlorophyll a-b binding protein CP24 10B, chloroplastic">
    <location>
        <begin position="46"/>
        <end position="256"/>
    </location>
</feature>
<feature type="transmembrane region" description="Helical" evidence="1">
    <location>
        <begin position="106"/>
        <end position="126"/>
    </location>
</feature>
<feature type="transmembrane region" description="Helical" evidence="1">
    <location>
        <begin position="134"/>
        <end position="154"/>
    </location>
</feature>
<protein>
    <recommendedName>
        <fullName>Chlorophyll a-b binding protein CP24 10B, chloroplastic</fullName>
        <shortName>CAB-10B</shortName>
        <shortName>LHCP</shortName>
    </recommendedName>
</protein>
<proteinExistence type="inferred from homology"/>
<name>CB4B_SOLLC</name>
<accession>P27525</accession>
<sequence length="256" mass="27471">MTTTSATAVLNGLSSSFLTGGKKTQALLGAHVTARVTTPKRFVVAAAAVAPKKSWIPAVKSGGNLVDPEWLDGSLPGDFGFDPLGLGKDPAFLKWYREAELIHGRWAMAAVLGIFVGQAWSGIPWFEAGADPGAIAPFSFGSLLGTQLLLMGWVESKRWVDFFDNDSQSIDWATPWSKTAENFANFTGEQGYPGGKFFDPLALAGTLNNGVYVPDTEKLERLKLAEIKHSRLAMLAMLIFYFEAGQGKTPLGALGL</sequence>
<keyword id="KW-0148">Chlorophyll</keyword>
<keyword id="KW-0150">Chloroplast</keyword>
<keyword id="KW-0157">Chromophore</keyword>
<keyword id="KW-0472">Membrane</keyword>
<keyword id="KW-0602">Photosynthesis</keyword>
<keyword id="KW-0604">Photosystem II</keyword>
<keyword id="KW-0934">Plastid</keyword>
<keyword id="KW-1185">Reference proteome</keyword>
<keyword id="KW-0793">Thylakoid</keyword>
<keyword id="KW-0809">Transit peptide</keyword>
<keyword id="KW-0812">Transmembrane</keyword>
<keyword id="KW-1133">Transmembrane helix</keyword>
<reference key="1">
    <citation type="journal article" date="1990" name="Plant Mol. Biol.">
        <title>Sequence of two tomato nuclear genes encoding chlorophyll a/b-binding proteins of CP24, a PSII antenna component.</title>
        <authorList>
            <person name="Schwartz E."/>
            <person name="Pichersky E."/>
        </authorList>
    </citation>
    <scope>NUCLEOTIDE SEQUENCE [GENOMIC DNA]</scope>
</reference>
<organism>
    <name type="scientific">Solanum lycopersicum</name>
    <name type="common">Tomato</name>
    <name type="synonym">Lycopersicon esculentum</name>
    <dbReference type="NCBI Taxonomy" id="4081"/>
    <lineage>
        <taxon>Eukaryota</taxon>
        <taxon>Viridiplantae</taxon>
        <taxon>Streptophyta</taxon>
        <taxon>Embryophyta</taxon>
        <taxon>Tracheophyta</taxon>
        <taxon>Spermatophyta</taxon>
        <taxon>Magnoliopsida</taxon>
        <taxon>eudicotyledons</taxon>
        <taxon>Gunneridae</taxon>
        <taxon>Pentapetalae</taxon>
        <taxon>asterids</taxon>
        <taxon>lamiids</taxon>
        <taxon>Solanales</taxon>
        <taxon>Solanaceae</taxon>
        <taxon>Solanoideae</taxon>
        <taxon>Solaneae</taxon>
        <taxon>Solanum</taxon>
        <taxon>Solanum subgen. Lycopersicon</taxon>
    </lineage>
</organism>
<gene>
    <name type="primary">CAP10B</name>
</gene>
<dbReference type="EMBL" id="M32606">
    <property type="protein sequence ID" value="AAA34146.1"/>
    <property type="molecule type" value="Genomic_DNA"/>
</dbReference>
<dbReference type="PIR" id="S11878">
    <property type="entry name" value="S11878"/>
</dbReference>
<dbReference type="RefSeq" id="NP_001296291.1">
    <property type="nucleotide sequence ID" value="NM_001309362.1"/>
</dbReference>
<dbReference type="SMR" id="P27525"/>
<dbReference type="FunCoup" id="P27525">
    <property type="interactions" value="1118"/>
</dbReference>
<dbReference type="STRING" id="4081.P27525"/>
<dbReference type="PaxDb" id="4081-Solyc01g105050.2.1"/>
<dbReference type="EnsemblPlants" id="Solyc01g105050.3.1">
    <property type="protein sequence ID" value="Solyc01g105050.3.1"/>
    <property type="gene ID" value="Solyc01g105050.3"/>
</dbReference>
<dbReference type="GeneID" id="101256131"/>
<dbReference type="Gramene" id="Solyc01g105050.3.1">
    <property type="protein sequence ID" value="Solyc01g105050.3.1"/>
    <property type="gene ID" value="Solyc01g105050.3"/>
</dbReference>
<dbReference type="KEGG" id="sly:101256131"/>
<dbReference type="eggNOG" id="ENOG502QPRI">
    <property type="taxonomic scope" value="Eukaryota"/>
</dbReference>
<dbReference type="HOGENOM" id="CLU_057943_1_1_1"/>
<dbReference type="InParanoid" id="P27525"/>
<dbReference type="OMA" id="IDWATPW"/>
<dbReference type="OrthoDB" id="423598at2759"/>
<dbReference type="PhylomeDB" id="P27525"/>
<dbReference type="Proteomes" id="UP000004994">
    <property type="component" value="Chromosome 1"/>
</dbReference>
<dbReference type="GO" id="GO:0009535">
    <property type="term" value="C:chloroplast thylakoid membrane"/>
    <property type="evidence" value="ECO:0007669"/>
    <property type="project" value="UniProtKB-SubCell"/>
</dbReference>
<dbReference type="GO" id="GO:0009523">
    <property type="term" value="C:photosystem II"/>
    <property type="evidence" value="ECO:0007669"/>
    <property type="project" value="UniProtKB-KW"/>
</dbReference>
<dbReference type="GO" id="GO:0016168">
    <property type="term" value="F:chlorophyll binding"/>
    <property type="evidence" value="ECO:0007669"/>
    <property type="project" value="UniProtKB-KW"/>
</dbReference>
<dbReference type="GO" id="GO:0009768">
    <property type="term" value="P:photosynthesis, light harvesting in photosystem I"/>
    <property type="evidence" value="ECO:0000318"/>
    <property type="project" value="GO_Central"/>
</dbReference>
<dbReference type="GO" id="GO:0009416">
    <property type="term" value="P:response to light stimulus"/>
    <property type="evidence" value="ECO:0000318"/>
    <property type="project" value="GO_Central"/>
</dbReference>
<dbReference type="FunFam" id="1.10.3460.10:FF:000005">
    <property type="entry name" value="Chlorophyll a-b binding protein, chloroplastic"/>
    <property type="match status" value="1"/>
</dbReference>
<dbReference type="Gene3D" id="1.10.3460.10">
    <property type="entry name" value="Chlorophyll a/b binding protein domain"/>
    <property type="match status" value="1"/>
</dbReference>
<dbReference type="InterPro" id="IPR001344">
    <property type="entry name" value="Chloro_AB-bd_pln"/>
</dbReference>
<dbReference type="InterPro" id="IPR022796">
    <property type="entry name" value="Chloroa_b-bind"/>
</dbReference>
<dbReference type="PANTHER" id="PTHR21649">
    <property type="entry name" value="CHLOROPHYLL A/B BINDING PROTEIN"/>
    <property type="match status" value="1"/>
</dbReference>
<dbReference type="Pfam" id="PF00504">
    <property type="entry name" value="Chloroa_b-bind"/>
    <property type="match status" value="1"/>
</dbReference>
<dbReference type="SUPFAM" id="SSF103511">
    <property type="entry name" value="Chlorophyll a-b binding protein"/>
    <property type="match status" value="1"/>
</dbReference>
<evidence type="ECO:0000255" key="1"/>
<evidence type="ECO:0000305" key="2"/>
<comment type="subcellular location">
    <subcellularLocation>
        <location>Plastid</location>
        <location>Chloroplast thylakoid membrane</location>
        <topology>Multi-pass membrane protein</topology>
    </subcellularLocation>
</comment>
<comment type="similarity">
    <text evidence="2">Belongs to the ELIP/psbS family.</text>
</comment>